<proteinExistence type="inferred from homology"/>
<reference key="1">
    <citation type="journal article" date="2000" name="Proc. Natl. Acad. Sci. U.S.A.">
        <title>Genome sequence of Halobacterium species NRC-1.</title>
        <authorList>
            <person name="Ng W.V."/>
            <person name="Kennedy S.P."/>
            <person name="Mahairas G.G."/>
            <person name="Berquist B."/>
            <person name="Pan M."/>
            <person name="Shukla H.D."/>
            <person name="Lasky S.R."/>
            <person name="Baliga N.S."/>
            <person name="Thorsson V."/>
            <person name="Sbrogna J."/>
            <person name="Swartzell S."/>
            <person name="Weir D."/>
            <person name="Hall J."/>
            <person name="Dahl T.A."/>
            <person name="Welti R."/>
            <person name="Goo Y.A."/>
            <person name="Leithauser B."/>
            <person name="Keller K."/>
            <person name="Cruz R."/>
            <person name="Danson M.J."/>
            <person name="Hough D.W."/>
            <person name="Maddocks D.G."/>
            <person name="Jablonski P.E."/>
            <person name="Krebs M.P."/>
            <person name="Angevine C.M."/>
            <person name="Dale H."/>
            <person name="Isenbarger T.A."/>
            <person name="Peck R.F."/>
            <person name="Pohlschroder M."/>
            <person name="Spudich J.L."/>
            <person name="Jung K.-H."/>
            <person name="Alam M."/>
            <person name="Freitas T."/>
            <person name="Hou S."/>
            <person name="Daniels C.J."/>
            <person name="Dennis P.P."/>
            <person name="Omer A.D."/>
            <person name="Ebhardt H."/>
            <person name="Lowe T.M."/>
            <person name="Liang P."/>
            <person name="Riley M."/>
            <person name="Hood L."/>
            <person name="DasSarma S."/>
        </authorList>
    </citation>
    <scope>NUCLEOTIDE SEQUENCE [LARGE SCALE GENOMIC DNA]</scope>
    <source>
        <strain>ATCC 700922 / JCM 11081 / NRC-1</strain>
    </source>
</reference>
<reference key="2">
    <citation type="journal article" date="2002" name="J. Bacteriol.">
        <title>Identification of a lycopene beta-cyclase required for bacteriorhodopsin biogenesis in the archaeon Halobacterium salinarum.</title>
        <authorList>
            <person name="Peck R.F."/>
            <person name="Johnson E.A."/>
            <person name="Krebs M.P."/>
        </authorList>
    </citation>
    <scope>IDENTIFICATION</scope>
    <source>
        <strain>ATCC 700922 / JCM 11081 / NRC-1</strain>
    </source>
</reference>
<accession>Q9HNE5</accession>
<comment type="function">
    <text evidence="1">Catalyzes the cyclization of both ends of lycopene to form beta-carotene, a retinal precursor. Is required for bacteriorhodopsin biogenesis, a light-driven proton pump with a covalently bound retinal cofactor.</text>
</comment>
<comment type="catalytic activity">
    <reaction evidence="1">
        <text>a carotenoid psi-end group = a carotenoid beta-end derivative</text>
        <dbReference type="Rhea" id="RHEA:55620"/>
        <dbReference type="ChEBI" id="CHEBI:139114"/>
        <dbReference type="ChEBI" id="CHEBI:139120"/>
        <dbReference type="EC" id="5.5.1.19"/>
    </reaction>
    <physiologicalReaction direction="left-to-right" evidence="1">
        <dbReference type="Rhea" id="RHEA:55621"/>
    </physiologicalReaction>
</comment>
<comment type="catalytic activity">
    <reaction evidence="1">
        <text>all-trans-lycopene = gamma-carotene</text>
        <dbReference type="Rhea" id="RHEA:32219"/>
        <dbReference type="ChEBI" id="CHEBI:15948"/>
        <dbReference type="ChEBI" id="CHEBI:27740"/>
        <dbReference type="EC" id="5.5.1.19"/>
    </reaction>
    <physiologicalReaction direction="left-to-right" evidence="1">
        <dbReference type="Rhea" id="RHEA:32220"/>
    </physiologicalReaction>
</comment>
<comment type="catalytic activity">
    <reaction evidence="1">
        <text>gamma-carotene = all-trans-beta-carotene</text>
        <dbReference type="Rhea" id="RHEA:32239"/>
        <dbReference type="ChEBI" id="CHEBI:17579"/>
        <dbReference type="ChEBI" id="CHEBI:27740"/>
        <dbReference type="EC" id="5.5.1.19"/>
    </reaction>
    <physiologicalReaction direction="left-to-right" evidence="1">
        <dbReference type="Rhea" id="RHEA:32240"/>
    </physiologicalReaction>
</comment>
<comment type="pathway">
    <text evidence="1">Carotenoid biosynthesis; beta-carotene biosynthesis.</text>
</comment>
<comment type="subcellular location">
    <subcellularLocation>
        <location evidence="1">Cell membrane</location>
        <topology evidence="4">Multi-pass membrane protein</topology>
    </subcellularLocation>
</comment>
<comment type="similarity">
    <text evidence="4">Belongs to the lycopene beta-cyclase family.</text>
</comment>
<comment type="sequence caution" evidence="4">
    <conflict type="erroneous initiation">
        <sequence resource="EMBL-CDS" id="AAG20275"/>
    </conflict>
    <text>Truncated N-terminus.</text>
</comment>
<sequence>MTTSYLTFLAVAVGPPLVALGVVRAARWDGDRARAAGVGILLALALSYTTPWDNYLIATGVWWYGEGTVVGRLWQMPIEEYLFVITQTLLTGLWVQALPLRPTAGFSPTRRDAVLGALAGVLVGCGGAVLLTVDATFYIGAIIAWAAPVLALQWAVGWRYLWRRRRVFAAAVLVPTLFLSAADRYAIADGIWILAGQYTTGITVLGLPIEEGAFFFVTNVFVSQGLILYAWVLARWR</sequence>
<feature type="chain" id="PRO_0000408501" description="Lycopene beta-cyclase">
    <location>
        <begin position="1"/>
        <end position="237"/>
    </location>
</feature>
<feature type="transmembrane region" description="Helical" evidence="2">
    <location>
        <begin position="3"/>
        <end position="23"/>
    </location>
</feature>
<feature type="transmembrane region" description="Helical" evidence="2">
    <location>
        <begin position="38"/>
        <end position="58"/>
    </location>
</feature>
<feature type="transmembrane region" description="Helical" evidence="2">
    <location>
        <begin position="80"/>
        <end position="100"/>
    </location>
</feature>
<feature type="transmembrane region" description="Helical" evidence="2">
    <location>
        <begin position="113"/>
        <end position="133"/>
    </location>
</feature>
<feature type="transmembrane region" description="Helical" evidence="2">
    <location>
        <begin position="137"/>
        <end position="157"/>
    </location>
</feature>
<feature type="transmembrane region" description="Helical" evidence="2">
    <location>
        <begin position="170"/>
        <end position="192"/>
    </location>
</feature>
<feature type="transmembrane region" description="Helical" evidence="2">
    <location>
        <begin position="213"/>
        <end position="233"/>
    </location>
</feature>
<evidence type="ECO:0000250" key="1">
    <source>
        <dbReference type="UniProtKB" id="B0R753"/>
    </source>
</evidence>
<evidence type="ECO:0000255" key="2"/>
<evidence type="ECO:0000303" key="3">
    <source>
    </source>
</evidence>
<evidence type="ECO:0000305" key="4"/>
<keyword id="KW-0125">Carotenoid biosynthesis</keyword>
<keyword id="KW-1003">Cell membrane</keyword>
<keyword id="KW-0413">Isomerase</keyword>
<keyword id="KW-0472">Membrane</keyword>
<keyword id="KW-1185">Reference proteome</keyword>
<keyword id="KW-0812">Transmembrane</keyword>
<keyword id="KW-1133">Transmembrane helix</keyword>
<dbReference type="EC" id="5.5.1.19" evidence="1"/>
<dbReference type="EMBL" id="AE004437">
    <property type="protein sequence ID" value="AAG20275.1"/>
    <property type="status" value="ALT_INIT"/>
    <property type="molecule type" value="Genomic_DNA"/>
</dbReference>
<dbReference type="PIR" id="G84363">
    <property type="entry name" value="G84363"/>
</dbReference>
<dbReference type="RefSeq" id="WP_012289440.1">
    <property type="nucleotide sequence ID" value="NC_002607.1"/>
</dbReference>
<dbReference type="STRING" id="64091.VNG_2137G"/>
<dbReference type="PaxDb" id="64091-VNG_2137G"/>
<dbReference type="GeneID" id="68694704"/>
<dbReference type="KEGG" id="hal:VNG_2137G"/>
<dbReference type="PATRIC" id="fig|64091.14.peg.1634"/>
<dbReference type="HOGENOM" id="CLU_1631607_0_0_2"/>
<dbReference type="InParanoid" id="Q9HNE5"/>
<dbReference type="OrthoDB" id="241129at2157"/>
<dbReference type="PhylomeDB" id="Q9HNE5"/>
<dbReference type="UniPathway" id="UPA00802"/>
<dbReference type="Proteomes" id="UP000000554">
    <property type="component" value="Chromosome"/>
</dbReference>
<dbReference type="GO" id="GO:0005886">
    <property type="term" value="C:plasma membrane"/>
    <property type="evidence" value="ECO:0007669"/>
    <property type="project" value="UniProtKB-SubCell"/>
</dbReference>
<dbReference type="GO" id="GO:0046905">
    <property type="term" value="F:15-cis-phytoene synthase activity"/>
    <property type="evidence" value="ECO:0000318"/>
    <property type="project" value="GO_Central"/>
</dbReference>
<dbReference type="GO" id="GO:0016872">
    <property type="term" value="F:intramolecular lyase activity"/>
    <property type="evidence" value="ECO:0007669"/>
    <property type="project" value="InterPro"/>
</dbReference>
<dbReference type="GO" id="GO:0045436">
    <property type="term" value="F:lycopene beta cyclase activity"/>
    <property type="evidence" value="ECO:0007669"/>
    <property type="project" value="RHEA"/>
</dbReference>
<dbReference type="GO" id="GO:0016117">
    <property type="term" value="P:carotenoid biosynthetic process"/>
    <property type="evidence" value="ECO:0007669"/>
    <property type="project" value="UniProtKB-KW"/>
</dbReference>
<dbReference type="InterPro" id="IPR017825">
    <property type="entry name" value="Lycopene_cyclase_dom"/>
</dbReference>
<dbReference type="NCBIfam" id="TIGR03462">
    <property type="entry name" value="CarR_dom_SF"/>
    <property type="match status" value="2"/>
</dbReference>
<dbReference type="Pfam" id="PF18916">
    <property type="entry name" value="Lycopene_cyc"/>
    <property type="match status" value="2"/>
</dbReference>
<organism>
    <name type="scientific">Halobacterium salinarum (strain ATCC 700922 / JCM 11081 / NRC-1)</name>
    <name type="common">Halobacterium halobium</name>
    <dbReference type="NCBI Taxonomy" id="64091"/>
    <lineage>
        <taxon>Archaea</taxon>
        <taxon>Methanobacteriati</taxon>
        <taxon>Methanobacteriota</taxon>
        <taxon>Stenosarchaea group</taxon>
        <taxon>Halobacteria</taxon>
        <taxon>Halobacteriales</taxon>
        <taxon>Halobacteriaceae</taxon>
        <taxon>Halobacterium</taxon>
        <taxon>Halobacterium salinarum NRC-34001</taxon>
    </lineage>
</organism>
<gene>
    <name evidence="3" type="primary">crtY</name>
    <name type="ordered locus">VNG_2137G</name>
</gene>
<protein>
    <recommendedName>
        <fullName evidence="3">Lycopene beta-cyclase</fullName>
        <ecNumber evidence="1">5.5.1.19</ecNumber>
    </recommendedName>
</protein>
<name>CRTY_HALSA</name>